<keyword id="KW-0687">Ribonucleoprotein</keyword>
<keyword id="KW-0689">Ribosomal protein</keyword>
<keyword id="KW-0694">RNA-binding</keyword>
<keyword id="KW-0699">rRNA-binding</keyword>
<keyword id="KW-0820">tRNA-binding</keyword>
<evidence type="ECO:0000255" key="1">
    <source>
        <dbReference type="HAMAP-Rule" id="MF_00480"/>
    </source>
</evidence>
<evidence type="ECO:0000305" key="2"/>
<comment type="function">
    <text evidence="1">One of the primary rRNA binding proteins, it binds directly to 16S rRNA where it nucleates assembly of the head domain of the 30S subunit. Is located at the subunit interface close to the decoding center, probably blocks exit of the E-site tRNA.</text>
</comment>
<comment type="subunit">
    <text evidence="1">Part of the 30S ribosomal subunit. Contacts proteins S9 and S11.</text>
</comment>
<comment type="similarity">
    <text evidence="1">Belongs to the universal ribosomal protein uS7 family.</text>
</comment>
<protein>
    <recommendedName>
        <fullName evidence="1">Small ribosomal subunit protein uS7</fullName>
    </recommendedName>
    <alternativeName>
        <fullName evidence="2">30S ribosomal protein S7</fullName>
    </alternativeName>
</protein>
<name>RS7_ACIF5</name>
<gene>
    <name evidence="1" type="primary">rpsG</name>
    <name type="ordered locus">Lferr_0493</name>
</gene>
<organism>
    <name type="scientific">Acidithiobacillus ferrooxidans (strain ATCC 53993 / BNL-5-31)</name>
    <name type="common">Leptospirillum ferrooxidans (ATCC 53993)</name>
    <dbReference type="NCBI Taxonomy" id="380394"/>
    <lineage>
        <taxon>Bacteria</taxon>
        <taxon>Pseudomonadati</taxon>
        <taxon>Pseudomonadota</taxon>
        <taxon>Acidithiobacillia</taxon>
        <taxon>Acidithiobacillales</taxon>
        <taxon>Acidithiobacillaceae</taxon>
        <taxon>Acidithiobacillus</taxon>
    </lineage>
</organism>
<proteinExistence type="inferred from homology"/>
<dbReference type="EMBL" id="CP001132">
    <property type="protein sequence ID" value="ACH82747.1"/>
    <property type="molecule type" value="Genomic_DNA"/>
</dbReference>
<dbReference type="RefSeq" id="WP_012536084.1">
    <property type="nucleotide sequence ID" value="NC_011206.1"/>
</dbReference>
<dbReference type="SMR" id="B5ELX5"/>
<dbReference type="GeneID" id="65279702"/>
<dbReference type="KEGG" id="afe:Lferr_0493"/>
<dbReference type="eggNOG" id="COG0049">
    <property type="taxonomic scope" value="Bacteria"/>
</dbReference>
<dbReference type="HOGENOM" id="CLU_072226_1_1_6"/>
<dbReference type="GO" id="GO:0015935">
    <property type="term" value="C:small ribosomal subunit"/>
    <property type="evidence" value="ECO:0007669"/>
    <property type="project" value="InterPro"/>
</dbReference>
<dbReference type="GO" id="GO:0019843">
    <property type="term" value="F:rRNA binding"/>
    <property type="evidence" value="ECO:0007669"/>
    <property type="project" value="UniProtKB-UniRule"/>
</dbReference>
<dbReference type="GO" id="GO:0003735">
    <property type="term" value="F:structural constituent of ribosome"/>
    <property type="evidence" value="ECO:0007669"/>
    <property type="project" value="InterPro"/>
</dbReference>
<dbReference type="GO" id="GO:0000049">
    <property type="term" value="F:tRNA binding"/>
    <property type="evidence" value="ECO:0007669"/>
    <property type="project" value="UniProtKB-UniRule"/>
</dbReference>
<dbReference type="GO" id="GO:0006412">
    <property type="term" value="P:translation"/>
    <property type="evidence" value="ECO:0007669"/>
    <property type="project" value="UniProtKB-UniRule"/>
</dbReference>
<dbReference type="CDD" id="cd14869">
    <property type="entry name" value="uS7_Bacteria"/>
    <property type="match status" value="1"/>
</dbReference>
<dbReference type="FunFam" id="1.10.455.10:FF:000001">
    <property type="entry name" value="30S ribosomal protein S7"/>
    <property type="match status" value="1"/>
</dbReference>
<dbReference type="Gene3D" id="1.10.455.10">
    <property type="entry name" value="Ribosomal protein S7 domain"/>
    <property type="match status" value="1"/>
</dbReference>
<dbReference type="HAMAP" id="MF_00480_B">
    <property type="entry name" value="Ribosomal_uS7_B"/>
    <property type="match status" value="1"/>
</dbReference>
<dbReference type="InterPro" id="IPR000235">
    <property type="entry name" value="Ribosomal_uS7"/>
</dbReference>
<dbReference type="InterPro" id="IPR005717">
    <property type="entry name" value="Ribosomal_uS7_bac/org-type"/>
</dbReference>
<dbReference type="InterPro" id="IPR020606">
    <property type="entry name" value="Ribosomal_uS7_CS"/>
</dbReference>
<dbReference type="InterPro" id="IPR023798">
    <property type="entry name" value="Ribosomal_uS7_dom"/>
</dbReference>
<dbReference type="InterPro" id="IPR036823">
    <property type="entry name" value="Ribosomal_uS7_dom_sf"/>
</dbReference>
<dbReference type="NCBIfam" id="TIGR01029">
    <property type="entry name" value="rpsG_bact"/>
    <property type="match status" value="1"/>
</dbReference>
<dbReference type="PANTHER" id="PTHR11205">
    <property type="entry name" value="RIBOSOMAL PROTEIN S7"/>
    <property type="match status" value="1"/>
</dbReference>
<dbReference type="Pfam" id="PF00177">
    <property type="entry name" value="Ribosomal_S7"/>
    <property type="match status" value="1"/>
</dbReference>
<dbReference type="PIRSF" id="PIRSF002122">
    <property type="entry name" value="RPS7p_RPS7a_RPS5e_RPS7o"/>
    <property type="match status" value="1"/>
</dbReference>
<dbReference type="SUPFAM" id="SSF47973">
    <property type="entry name" value="Ribosomal protein S7"/>
    <property type="match status" value="1"/>
</dbReference>
<dbReference type="PROSITE" id="PS00052">
    <property type="entry name" value="RIBOSOMAL_S7"/>
    <property type="match status" value="1"/>
</dbReference>
<feature type="chain" id="PRO_1000125882" description="Small ribosomal subunit protein uS7">
    <location>
        <begin position="1"/>
        <end position="156"/>
    </location>
</feature>
<accession>B5ELX5</accession>
<sequence length="156" mass="18080">MPRRREVPKRVVLPDPKYKEEVIAKFANVMMRDGKKSTAEKIVYGALEMVAERSKSDALEIFRKAIDNVRPVVEVKSRRVGGATYQVPVEIRSDRRMALAMRWLRDSARKRNEKSMGNRLAAEILEAAENRGNAVRKREETHRMAEANKAFAHFRW</sequence>
<reference key="1">
    <citation type="submission" date="2008-08" db="EMBL/GenBank/DDBJ databases">
        <title>Complete sequence of Acidithiobacillus ferrooxidans ATCC 53993.</title>
        <authorList>
            <person name="Lucas S."/>
            <person name="Copeland A."/>
            <person name="Lapidus A."/>
            <person name="Glavina del Rio T."/>
            <person name="Dalin E."/>
            <person name="Tice H."/>
            <person name="Bruce D."/>
            <person name="Goodwin L."/>
            <person name="Pitluck S."/>
            <person name="Sims D."/>
            <person name="Brettin T."/>
            <person name="Detter J.C."/>
            <person name="Han C."/>
            <person name="Kuske C.R."/>
            <person name="Larimer F."/>
            <person name="Land M."/>
            <person name="Hauser L."/>
            <person name="Kyrpides N."/>
            <person name="Lykidis A."/>
            <person name="Borole A.P."/>
        </authorList>
    </citation>
    <scope>NUCLEOTIDE SEQUENCE [LARGE SCALE GENOMIC DNA]</scope>
    <source>
        <strain>ATCC 53993 / BNL-5-31</strain>
    </source>
</reference>